<comment type="function">
    <text evidence="1 2">Serine/threonine kinase involved in the regulation of key cellular processes including the cell cycle, nuclear condensation, transcription regulation, and DNA damage response (By similarity). Controls chromatin organization and remodeling by mediating phosphorylation of histone H3 on 'Thr-4' and histone H2AX (H2aXT4ph) (By similarity). It also phosphorylates KAT5 in response to DNA damage, promoting KAT5 association with chromatin and histone acetyltransferase activity (By similarity). Is involved in the regulation of cell cycle progression of neural progenitors, and is required for proper cortical neuronal migration (By similarity). Is involved in neurite elongation and branching in motor neurons, and has an essential role in Cajal bodies assembly, acting through COIL phosphorylation and the control of coilin degradation (By similarity). Involved in Golgi disassembly during the cell cycle: following phosphorylation by PLK3 during mitosis, it is required to induce Golgi fragmentation (By similarity). Phosphorylates BANF1: disrupts its ability to bind DNA, reduces its binding to LEM domain-containing proteins and causes its relocalization from the nucleus to the cytoplasm. Phosphorylates TP53BP1 and p53/TP53 on 'Thr-18', preventing the interaction between p53/TP53 and MDM2. Phosphorylates ATF2 which activates its transcriptional activity. Phosphorylates JUN (By similarity).</text>
</comment>
<comment type="catalytic activity">
    <reaction evidence="2">
        <text>L-seryl-[protein] + ATP = O-phospho-L-seryl-[protein] + ADP + H(+)</text>
        <dbReference type="Rhea" id="RHEA:17989"/>
        <dbReference type="Rhea" id="RHEA-COMP:9863"/>
        <dbReference type="Rhea" id="RHEA-COMP:11604"/>
        <dbReference type="ChEBI" id="CHEBI:15378"/>
        <dbReference type="ChEBI" id="CHEBI:29999"/>
        <dbReference type="ChEBI" id="CHEBI:30616"/>
        <dbReference type="ChEBI" id="CHEBI:83421"/>
        <dbReference type="ChEBI" id="CHEBI:456216"/>
        <dbReference type="EC" id="2.7.11.1"/>
    </reaction>
</comment>
<comment type="catalytic activity">
    <reaction evidence="2">
        <text>L-threonyl-[protein] + ATP = O-phospho-L-threonyl-[protein] + ADP + H(+)</text>
        <dbReference type="Rhea" id="RHEA:46608"/>
        <dbReference type="Rhea" id="RHEA-COMP:11060"/>
        <dbReference type="Rhea" id="RHEA-COMP:11605"/>
        <dbReference type="ChEBI" id="CHEBI:15378"/>
        <dbReference type="ChEBI" id="CHEBI:30013"/>
        <dbReference type="ChEBI" id="CHEBI:30616"/>
        <dbReference type="ChEBI" id="CHEBI:61977"/>
        <dbReference type="ChEBI" id="CHEBI:456216"/>
        <dbReference type="EC" id="2.7.11.1"/>
    </reaction>
</comment>
<comment type="subcellular location">
    <subcellularLocation>
        <location evidence="2">Nucleus</location>
    </subcellularLocation>
    <subcellularLocation>
        <location evidence="2">Cytoplasm</location>
    </subcellularLocation>
    <subcellularLocation>
        <location evidence="2">Nucleus</location>
        <location evidence="2">Cajal body</location>
    </subcellularLocation>
    <text evidence="2">Enriched on chromatin during mitotic chromatin condensation.</text>
</comment>
<comment type="similarity">
    <text evidence="6">Belongs to the protein kinase superfamily. CK1 Ser/Thr protein kinase family. VRK subfamily.</text>
</comment>
<protein>
    <recommendedName>
        <fullName>Serine/threonine-protein kinase VRK1</fullName>
        <ecNumber evidence="2">2.7.11.1</ecNumber>
    </recommendedName>
    <alternativeName>
        <fullName>Vaccinia-related kinase 1</fullName>
    </alternativeName>
</protein>
<keyword id="KW-0067">ATP-binding</keyword>
<keyword id="KW-0131">Cell cycle</keyword>
<keyword id="KW-0132">Cell division</keyword>
<keyword id="KW-0963">Cytoplasm</keyword>
<keyword id="KW-0418">Kinase</keyword>
<keyword id="KW-0498">Mitosis</keyword>
<keyword id="KW-0547">Nucleotide-binding</keyword>
<keyword id="KW-0539">Nucleus</keyword>
<keyword id="KW-1185">Reference proteome</keyword>
<keyword id="KW-0723">Serine/threonine-protein kinase</keyword>
<keyword id="KW-0808">Transferase</keyword>
<organism>
    <name type="scientific">Danio rerio</name>
    <name type="common">Zebrafish</name>
    <name type="synonym">Brachydanio rerio</name>
    <dbReference type="NCBI Taxonomy" id="7955"/>
    <lineage>
        <taxon>Eukaryota</taxon>
        <taxon>Metazoa</taxon>
        <taxon>Chordata</taxon>
        <taxon>Craniata</taxon>
        <taxon>Vertebrata</taxon>
        <taxon>Euteleostomi</taxon>
        <taxon>Actinopterygii</taxon>
        <taxon>Neopterygii</taxon>
        <taxon>Teleostei</taxon>
        <taxon>Ostariophysi</taxon>
        <taxon>Cypriniformes</taxon>
        <taxon>Danionidae</taxon>
        <taxon>Danioninae</taxon>
        <taxon>Danio</taxon>
    </lineage>
</organism>
<reference key="1">
    <citation type="submission" date="2003-03" db="EMBL/GenBank/DDBJ databases">
        <authorList>
            <consortium name="NIH - Zebrafish Gene Collection (ZGC) project"/>
        </authorList>
    </citation>
    <scope>NUCLEOTIDE SEQUENCE [LARGE SCALE MRNA]</scope>
</reference>
<dbReference type="EC" id="2.7.11.1" evidence="2"/>
<dbReference type="EMBL" id="BC047853">
    <property type="protein sequence ID" value="AAH47853.1"/>
    <property type="molecule type" value="mRNA"/>
</dbReference>
<dbReference type="RefSeq" id="NP_998550.1">
    <property type="nucleotide sequence ID" value="NM_213385.1"/>
</dbReference>
<dbReference type="SMR" id="Q7ZUS1"/>
<dbReference type="FunCoup" id="Q7ZUS1">
    <property type="interactions" value="2663"/>
</dbReference>
<dbReference type="STRING" id="7955.ENSDARP00000045990"/>
<dbReference type="PaxDb" id="7955-ENSDARP00000045990"/>
<dbReference type="GeneID" id="406694"/>
<dbReference type="KEGG" id="dre:406694"/>
<dbReference type="AGR" id="ZFIN:ZDB-GENE-040426-2709"/>
<dbReference type="CTD" id="7443"/>
<dbReference type="ZFIN" id="ZDB-GENE-040426-2709">
    <property type="gene designation" value="vrk1"/>
</dbReference>
<dbReference type="eggNOG" id="KOG1164">
    <property type="taxonomic scope" value="Eukaryota"/>
</dbReference>
<dbReference type="InParanoid" id="Q7ZUS1"/>
<dbReference type="OrthoDB" id="2687620at2759"/>
<dbReference type="PhylomeDB" id="Q7ZUS1"/>
<dbReference type="Reactome" id="R-DRE-2995383">
    <property type="pathway name" value="Initiation of Nuclear Envelope (NE) Reformation"/>
</dbReference>
<dbReference type="PRO" id="PR:Q7ZUS1"/>
<dbReference type="Proteomes" id="UP000000437">
    <property type="component" value="Chromosome 17"/>
</dbReference>
<dbReference type="GO" id="GO:0015030">
    <property type="term" value="C:Cajal body"/>
    <property type="evidence" value="ECO:0007669"/>
    <property type="project" value="UniProtKB-SubCell"/>
</dbReference>
<dbReference type="GO" id="GO:0005737">
    <property type="term" value="C:cytoplasm"/>
    <property type="evidence" value="ECO:0000318"/>
    <property type="project" value="GO_Central"/>
</dbReference>
<dbReference type="GO" id="GO:0005795">
    <property type="term" value="C:Golgi stack"/>
    <property type="evidence" value="ECO:0000250"/>
    <property type="project" value="UniProtKB"/>
</dbReference>
<dbReference type="GO" id="GO:0005634">
    <property type="term" value="C:nucleus"/>
    <property type="evidence" value="ECO:0000318"/>
    <property type="project" value="GO_Central"/>
</dbReference>
<dbReference type="GO" id="GO:0005524">
    <property type="term" value="F:ATP binding"/>
    <property type="evidence" value="ECO:0007669"/>
    <property type="project" value="UniProtKB-KW"/>
</dbReference>
<dbReference type="GO" id="GO:0106310">
    <property type="term" value="F:protein serine kinase activity"/>
    <property type="evidence" value="ECO:0007669"/>
    <property type="project" value="RHEA"/>
</dbReference>
<dbReference type="GO" id="GO:0004674">
    <property type="term" value="F:protein serine/threonine kinase activity"/>
    <property type="evidence" value="ECO:0000250"/>
    <property type="project" value="UniProtKB"/>
</dbReference>
<dbReference type="GO" id="GO:0051301">
    <property type="term" value="P:cell division"/>
    <property type="evidence" value="ECO:0007669"/>
    <property type="project" value="UniProtKB-KW"/>
</dbReference>
<dbReference type="GO" id="GO:0006974">
    <property type="term" value="P:DNA damage response"/>
    <property type="evidence" value="ECO:0000250"/>
    <property type="project" value="UniProtKB"/>
</dbReference>
<dbReference type="GO" id="GO:0090166">
    <property type="term" value="P:Golgi disassembly"/>
    <property type="evidence" value="ECO:0000250"/>
    <property type="project" value="UniProtKB"/>
</dbReference>
<dbReference type="GO" id="GO:0061351">
    <property type="term" value="P:neural precursor cell proliferation"/>
    <property type="evidence" value="ECO:0000315"/>
    <property type="project" value="ZFIN"/>
</dbReference>
<dbReference type="GO" id="GO:0120187">
    <property type="term" value="P:positive regulation of protein localization to chromatin"/>
    <property type="evidence" value="ECO:0000250"/>
    <property type="project" value="UniProtKB"/>
</dbReference>
<dbReference type="GO" id="GO:0007165">
    <property type="term" value="P:signal transduction"/>
    <property type="evidence" value="ECO:0000318"/>
    <property type="project" value="GO_Central"/>
</dbReference>
<dbReference type="GO" id="GO:0007283">
    <property type="term" value="P:spermatogenesis"/>
    <property type="evidence" value="ECO:0000315"/>
    <property type="project" value="ZFIN"/>
</dbReference>
<dbReference type="FunFam" id="1.10.510.10:FF:000348">
    <property type="entry name" value="serine/threonine-protein kinase VRK1 isoform X1"/>
    <property type="match status" value="1"/>
</dbReference>
<dbReference type="Gene3D" id="1.10.510.10">
    <property type="entry name" value="Transferase(Phosphotransferase) domain 1"/>
    <property type="match status" value="1"/>
</dbReference>
<dbReference type="InterPro" id="IPR050235">
    <property type="entry name" value="CK1_Ser-Thr_kinase"/>
</dbReference>
<dbReference type="InterPro" id="IPR011009">
    <property type="entry name" value="Kinase-like_dom_sf"/>
</dbReference>
<dbReference type="InterPro" id="IPR000719">
    <property type="entry name" value="Prot_kinase_dom"/>
</dbReference>
<dbReference type="InterPro" id="IPR017441">
    <property type="entry name" value="Protein_kinase_ATP_BS"/>
</dbReference>
<dbReference type="InterPro" id="IPR008271">
    <property type="entry name" value="Ser/Thr_kinase_AS"/>
</dbReference>
<dbReference type="PANTHER" id="PTHR11909">
    <property type="entry name" value="CASEIN KINASE-RELATED"/>
    <property type="match status" value="1"/>
</dbReference>
<dbReference type="Pfam" id="PF00069">
    <property type="entry name" value="Pkinase"/>
    <property type="match status" value="1"/>
</dbReference>
<dbReference type="SMART" id="SM00220">
    <property type="entry name" value="S_TKc"/>
    <property type="match status" value="1"/>
</dbReference>
<dbReference type="SUPFAM" id="SSF56112">
    <property type="entry name" value="Protein kinase-like (PK-like)"/>
    <property type="match status" value="1"/>
</dbReference>
<dbReference type="PROSITE" id="PS00107">
    <property type="entry name" value="PROTEIN_KINASE_ATP"/>
    <property type="match status" value="1"/>
</dbReference>
<dbReference type="PROSITE" id="PS50011">
    <property type="entry name" value="PROTEIN_KINASE_DOM"/>
    <property type="match status" value="1"/>
</dbReference>
<dbReference type="PROSITE" id="PS00108">
    <property type="entry name" value="PROTEIN_KINASE_ST"/>
    <property type="match status" value="1"/>
</dbReference>
<proteinExistence type="evidence at transcript level"/>
<feature type="chain" id="PRO_0000086805" description="Serine/threonine-protein kinase VRK1">
    <location>
        <begin position="1"/>
        <end position="425"/>
    </location>
</feature>
<feature type="domain" description="Protein kinase" evidence="3">
    <location>
        <begin position="38"/>
        <end position="329"/>
    </location>
</feature>
<feature type="region of interest" description="Disordered" evidence="5">
    <location>
        <begin position="343"/>
        <end position="425"/>
    </location>
</feature>
<feature type="compositionally biased region" description="Basic residues" evidence="5">
    <location>
        <begin position="415"/>
        <end position="425"/>
    </location>
</feature>
<feature type="active site" description="Proton acceptor" evidence="3 4">
    <location>
        <position position="178"/>
    </location>
</feature>
<feature type="binding site" evidence="3">
    <location>
        <begin position="44"/>
        <end position="52"/>
    </location>
    <ligand>
        <name>ATP</name>
        <dbReference type="ChEBI" id="CHEBI:30616"/>
    </ligand>
</feature>
<feature type="binding site" evidence="3">
    <location>
        <position position="72"/>
    </location>
    <ligand>
        <name>ATP</name>
        <dbReference type="ChEBI" id="CHEBI:30616"/>
    </ligand>
</feature>
<evidence type="ECO:0000250" key="1">
    <source>
        <dbReference type="UniProtKB" id="Q80X41"/>
    </source>
</evidence>
<evidence type="ECO:0000250" key="2">
    <source>
        <dbReference type="UniProtKB" id="Q99986"/>
    </source>
</evidence>
<evidence type="ECO:0000255" key="3">
    <source>
        <dbReference type="PROSITE-ProRule" id="PRU00159"/>
    </source>
</evidence>
<evidence type="ECO:0000255" key="4">
    <source>
        <dbReference type="PROSITE-ProRule" id="PRU10027"/>
    </source>
</evidence>
<evidence type="ECO:0000256" key="5">
    <source>
        <dbReference type="SAM" id="MobiDB-lite"/>
    </source>
</evidence>
<evidence type="ECO:0000305" key="6"/>
<sequence length="425" mass="47771">MPPKKADGVKKARAPAKRKLAEEFPSGEVLTDNAKKKWKLGSAVGQGGFGLLYLANEDSSGPVTADAPYVIKVEPSDNGPLFSELKFYMRAAKPDLIGAWMKSKKMEYLGVPKYWGSGFHEKNGKRYRFMVMDRFGTDLQKLFEGNGKKFSRKLVLQLGLRLLDILEYIHDHEYVHADIKASNLLLSYTNPNQVFLVDYGLAYRYAPEGVPKEYKEDPKRCHDGTIEFTSIDAHKGVSPSRRADLEIMGYCMIQWLCSRLPWEDKLQDPLYVRDSKLRCRDNIDEFLKSCFASGNIPAEMGKFMQEVKVLGYTDRPDYDKLRGILQQGLKSIGSTDDKKLDFGVATNSTSLPSVKTPKRKKAEEKGQSADETDSTPAKKRRAPQKKEVNGAKKTASPAKRPVKKETQASSEPAVKKSRGRPKKNS</sequence>
<gene>
    <name type="primary">vrk1</name>
    <name type="ORF">zgc:56266</name>
</gene>
<name>VRK1_DANRE</name>
<accession>Q7ZUS1</accession>